<gene>
    <name type="primary">Uxt</name>
</gene>
<evidence type="ECO:0000250" key="1">
    <source>
        <dbReference type="UniProtKB" id="Q9UBK9"/>
    </source>
</evidence>
<evidence type="ECO:0000305" key="2"/>
<sequence length="157" mass="18166">MATPPKRRALDTVGEKVLRYEAFISDVLQRDLQKVLDHRDKVYEQLSVYLQLRNVIERLQETNHSELYMQVDLGCNFFVDTMVPDTSRIYVALGYGFFLELTLAEALKFIDRKSSLLTELSDSLTKDSMNIKANIHMMLEGLRELQGLQNFPEPSPH</sequence>
<keyword id="KW-0010">Activator</keyword>
<keyword id="KW-0143">Chaperone</keyword>
<keyword id="KW-0963">Cytoplasm</keyword>
<keyword id="KW-0206">Cytoskeleton</keyword>
<keyword id="KW-0539">Nucleus</keyword>
<keyword id="KW-1185">Reference proteome</keyword>
<keyword id="KW-0678">Repressor</keyword>
<keyword id="KW-0804">Transcription</keyword>
<keyword id="KW-0805">Transcription regulation</keyword>
<name>UXT_RAT</name>
<comment type="function">
    <text evidence="1">Involved in gene transcription regulation. Acts in concert with the corepressor URI1 to regulate androgen receptor AR-mediated transcription. Together with URI1, associates with chromatin to the NKX3-1 promoter region. Negatively regulates the transcriptional activity of the estrogen receptor ESR1 by inducing its translocation into the cytoplasm. May act as nuclear chaperone that facilitates the formation of the NF-kappa-B enhanceosome and thus positively regulates NF-kappa-B transcription activity. Potential component of mitochondrial-associated LRPPRC, a multidomain organizer that potentially integrates mitochondria and the microtubular cytoskeleton with chromosome remodeling. Increasing concentrations of UXT contributes to progressive aggregation of mitochondria and cell death potentially through its association with LRPPRC. Suppresses cell transformation and it might mediate this function by interaction and inhibition of the biological activity of cell proliferation and survival stimulatory factors like MECOM.</text>
</comment>
<comment type="subunit">
    <text evidence="1">Homohexamer. Component of the PAQosome complex which is responsible for the biogenesis of several protein complexes and which consists of R2TP complex members RUVBL1, RUVBL2, RPAP3 and PIH1D1, URI complex members PFDN2, PFDN6, PDRG1, UXT and URI1 as well as ASDURF, POLR2E and DNAAF10/WDR92. Interacts with LRPPRC. Interacts with androgen receptor AR (via N-terminus). Interacts with estrogen receptor ESR1; the interaction relocalizes ESR1 to the cytoplasm. In the nucleus, interacts specifically with RELA (via RHD domain) and forms a dynamic complex with NF-kappa-B and is recruited to the NF-kappa-B enhanceosome upon stimulation. Interacts with MECOM. Interacts with URI1.</text>
</comment>
<comment type="subcellular location">
    <subcellularLocation>
        <location evidence="1">Cytoplasm</location>
    </subcellularLocation>
    <subcellularLocation>
        <location evidence="1">Nucleus</location>
    </subcellularLocation>
    <subcellularLocation>
        <location evidence="1">Cytoplasm</location>
        <location evidence="1">Cytoskeleton</location>
        <location evidence="1">Microtubule organizing center</location>
        <location evidence="1">Centrosome</location>
    </subcellularLocation>
    <subcellularLocation>
        <location evidence="1">Cytoplasm</location>
        <location evidence="1">Cytoskeleton</location>
        <location evidence="1">Spindle pole</location>
    </subcellularLocation>
    <text evidence="1">Predominantly localizes to the nucleus. Localizes to spindle pole during mitosis.</text>
</comment>
<comment type="similarity">
    <text evidence="2">Belongs to the UXT family.</text>
</comment>
<feature type="chain" id="PRO_0000330760" description="Protein UXT">
    <location>
        <begin position="1"/>
        <end position="157"/>
    </location>
</feature>
<dbReference type="EMBL" id="BC082752">
    <property type="protein sequence ID" value="AAH82752.1"/>
    <property type="molecule type" value="mRNA"/>
</dbReference>
<dbReference type="RefSeq" id="NP_001006983.1">
    <property type="nucleotide sequence ID" value="NM_001006982.1"/>
</dbReference>
<dbReference type="RefSeq" id="XP_006256673.1">
    <property type="nucleotide sequence ID" value="XM_006256611.5"/>
</dbReference>
<dbReference type="SMR" id="Q63ZY7"/>
<dbReference type="FunCoup" id="Q63ZY7">
    <property type="interactions" value="774"/>
</dbReference>
<dbReference type="STRING" id="10116.ENSRNOP00000013476"/>
<dbReference type="PhosphoSitePlus" id="Q63ZY7"/>
<dbReference type="jPOST" id="Q63ZY7"/>
<dbReference type="PaxDb" id="10116-ENSRNOP00000013476"/>
<dbReference type="Ensembl" id="ENSRNOT00000013476.8">
    <property type="protein sequence ID" value="ENSRNOP00000013476.4"/>
    <property type="gene ID" value="ENSRNOG00000009893.8"/>
</dbReference>
<dbReference type="GeneID" id="299313"/>
<dbReference type="KEGG" id="rno:299313"/>
<dbReference type="UCSC" id="RGD:1359326">
    <property type="organism name" value="rat"/>
</dbReference>
<dbReference type="AGR" id="RGD:1359326"/>
<dbReference type="CTD" id="8409"/>
<dbReference type="RGD" id="1359326">
    <property type="gene designation" value="Uxt"/>
</dbReference>
<dbReference type="eggNOG" id="KOG3047">
    <property type="taxonomic scope" value="Eukaryota"/>
</dbReference>
<dbReference type="GeneTree" id="ENSGT00390000018078"/>
<dbReference type="HOGENOM" id="CLU_121199_1_0_1"/>
<dbReference type="InParanoid" id="Q63ZY7"/>
<dbReference type="OMA" id="HMPDGYK"/>
<dbReference type="OrthoDB" id="433124at2759"/>
<dbReference type="PhylomeDB" id="Q63ZY7"/>
<dbReference type="TreeFam" id="TF323827"/>
<dbReference type="PRO" id="PR:Q63ZY7"/>
<dbReference type="Proteomes" id="UP000002494">
    <property type="component" value="Chromosome X"/>
</dbReference>
<dbReference type="Bgee" id="ENSRNOG00000009893">
    <property type="expression patterns" value="Expressed in ovary and 20 other cell types or tissues"/>
</dbReference>
<dbReference type="GO" id="GO:0005813">
    <property type="term" value="C:centrosome"/>
    <property type="evidence" value="ECO:0000250"/>
    <property type="project" value="HGNC-UCL"/>
</dbReference>
<dbReference type="GO" id="GO:0000785">
    <property type="term" value="C:chromatin"/>
    <property type="evidence" value="ECO:0000318"/>
    <property type="project" value="GO_Central"/>
</dbReference>
<dbReference type="GO" id="GO:0005737">
    <property type="term" value="C:cytoplasm"/>
    <property type="evidence" value="ECO:0000250"/>
    <property type="project" value="UniProtKB"/>
</dbReference>
<dbReference type="GO" id="GO:0005856">
    <property type="term" value="C:cytoskeleton"/>
    <property type="evidence" value="ECO:0000250"/>
    <property type="project" value="HGNC-UCL"/>
</dbReference>
<dbReference type="GO" id="GO:0016592">
    <property type="term" value="C:mediator complex"/>
    <property type="evidence" value="ECO:0000318"/>
    <property type="project" value="GO_Central"/>
</dbReference>
<dbReference type="GO" id="GO:0005634">
    <property type="term" value="C:nucleus"/>
    <property type="evidence" value="ECO:0000250"/>
    <property type="project" value="UniProtKB"/>
</dbReference>
<dbReference type="GO" id="GO:1990062">
    <property type="term" value="C:RPAP3/R2TP/prefoldin-like complex"/>
    <property type="evidence" value="ECO:0000266"/>
    <property type="project" value="RGD"/>
</dbReference>
<dbReference type="GO" id="GO:0000922">
    <property type="term" value="C:spindle pole"/>
    <property type="evidence" value="ECO:0007669"/>
    <property type="project" value="UniProtKB-SubCell"/>
</dbReference>
<dbReference type="GO" id="GO:0048487">
    <property type="term" value="F:beta-tubulin binding"/>
    <property type="evidence" value="ECO:0000250"/>
    <property type="project" value="HGNC-UCL"/>
</dbReference>
<dbReference type="GO" id="GO:0003682">
    <property type="term" value="F:chromatin binding"/>
    <property type="evidence" value="ECO:0000250"/>
    <property type="project" value="UniProtKB"/>
</dbReference>
<dbReference type="GO" id="GO:0003714">
    <property type="term" value="F:transcription corepressor activity"/>
    <property type="evidence" value="ECO:0000250"/>
    <property type="project" value="UniProtKB"/>
</dbReference>
<dbReference type="GO" id="GO:0007098">
    <property type="term" value="P:centrosome cycle"/>
    <property type="evidence" value="ECO:0000250"/>
    <property type="project" value="HGNC-UCL"/>
</dbReference>
<dbReference type="GO" id="GO:0000226">
    <property type="term" value="P:microtubule cytoskeleton organization"/>
    <property type="evidence" value="ECO:0000250"/>
    <property type="project" value="HGNC-UCL"/>
</dbReference>
<dbReference type="GO" id="GO:0000122">
    <property type="term" value="P:negative regulation of transcription by RNA polymerase II"/>
    <property type="evidence" value="ECO:0000250"/>
    <property type="project" value="UniProtKB"/>
</dbReference>
<dbReference type="CDD" id="cd23158">
    <property type="entry name" value="Prefoldin_UXT"/>
    <property type="match status" value="1"/>
</dbReference>
<dbReference type="FunFam" id="1.10.287.370:FF:000007">
    <property type="entry name" value="UXT isoform 1"/>
    <property type="match status" value="1"/>
</dbReference>
<dbReference type="Gene3D" id="1.10.287.370">
    <property type="match status" value="1"/>
</dbReference>
<dbReference type="InterPro" id="IPR009053">
    <property type="entry name" value="Prefoldin"/>
</dbReference>
<dbReference type="InterPro" id="IPR004127">
    <property type="entry name" value="Prefoldin_subunit_alpha"/>
</dbReference>
<dbReference type="InterPro" id="IPR003994">
    <property type="entry name" value="UXT"/>
</dbReference>
<dbReference type="PANTHER" id="PTHR13345">
    <property type="entry name" value="MEDIATOR OF RNA POLYMERASE II TRANSCRIPTION SUBUNIT 10"/>
    <property type="match status" value="1"/>
</dbReference>
<dbReference type="PANTHER" id="PTHR13345:SF9">
    <property type="entry name" value="PROTEIN UXT"/>
    <property type="match status" value="1"/>
</dbReference>
<dbReference type="Pfam" id="PF02996">
    <property type="entry name" value="Prefoldin"/>
    <property type="match status" value="1"/>
</dbReference>
<dbReference type="PRINTS" id="PR01502">
    <property type="entry name" value="UXTPROTEIN"/>
</dbReference>
<dbReference type="SUPFAM" id="SSF46579">
    <property type="entry name" value="Prefoldin"/>
    <property type="match status" value="1"/>
</dbReference>
<accession>Q63ZY7</accession>
<reference key="1">
    <citation type="journal article" date="2004" name="Genome Res.">
        <title>The status, quality, and expansion of the NIH full-length cDNA project: the Mammalian Gene Collection (MGC).</title>
        <authorList>
            <consortium name="The MGC Project Team"/>
        </authorList>
    </citation>
    <scope>NUCLEOTIDE SEQUENCE [LARGE SCALE MRNA]</scope>
    <source>
        <tissue>Ovary</tissue>
    </source>
</reference>
<proteinExistence type="evidence at transcript level"/>
<organism>
    <name type="scientific">Rattus norvegicus</name>
    <name type="common">Rat</name>
    <dbReference type="NCBI Taxonomy" id="10116"/>
    <lineage>
        <taxon>Eukaryota</taxon>
        <taxon>Metazoa</taxon>
        <taxon>Chordata</taxon>
        <taxon>Craniata</taxon>
        <taxon>Vertebrata</taxon>
        <taxon>Euteleostomi</taxon>
        <taxon>Mammalia</taxon>
        <taxon>Eutheria</taxon>
        <taxon>Euarchontoglires</taxon>
        <taxon>Glires</taxon>
        <taxon>Rodentia</taxon>
        <taxon>Myomorpha</taxon>
        <taxon>Muroidea</taxon>
        <taxon>Muridae</taxon>
        <taxon>Murinae</taxon>
        <taxon>Rattus</taxon>
    </lineage>
</organism>
<protein>
    <recommendedName>
        <fullName>Protein UXT</fullName>
    </recommendedName>
    <alternativeName>
        <fullName>Ubiquitously expressed transcript protein</fullName>
    </alternativeName>
</protein>